<sequence length="354" mass="39778">MNGTEGPNFYIPMSNKTGVVRSPFEYPQYYLAEPWQYSILCAYMFLLILLGFPINFMTLYVTIQHKKLRTPLNYILLNLAFANHFMVLCGFTVTMYSSMNGYFILGATGCYVEGFFATLGGEIALWSLVVLAIERYVVVCKPMSNFRFSENHAVMGVAFTWIMALSCAVPPLLGWSRYIPEGMQCSCGVDYYTLKPEVNNESFVIYMFVVHFTIPLIIIFFCYGRLVCTVKEAAAQQQESATTQKAEKEVTRMVIIMVVFFLICWVPYASVAFFIFSNQGSEFGPIFMTVPAFFAKSSSIYNPVIYIMLNKQFRNCMITTLCCGKNPFGEDDASSAATSKTEASSVSSSQVSPA</sequence>
<feature type="chain" id="PRO_0000197655" description="Rhodopsin">
    <location>
        <begin position="1"/>
        <end position="354"/>
    </location>
</feature>
<feature type="topological domain" description="Extracellular" evidence="6">
    <location>
        <begin position="1"/>
        <end position="36"/>
    </location>
</feature>
<feature type="transmembrane region" description="Helical; Name=1" evidence="1">
    <location>
        <begin position="37"/>
        <end position="61"/>
    </location>
</feature>
<feature type="topological domain" description="Cytoplasmic" evidence="6">
    <location>
        <begin position="62"/>
        <end position="73"/>
    </location>
</feature>
<feature type="transmembrane region" description="Helical; Name=2" evidence="1">
    <location>
        <begin position="74"/>
        <end position="96"/>
    </location>
</feature>
<feature type="topological domain" description="Extracellular" evidence="6">
    <location>
        <begin position="97"/>
        <end position="110"/>
    </location>
</feature>
<feature type="transmembrane region" description="Helical; Name=3" evidence="1">
    <location>
        <begin position="111"/>
        <end position="133"/>
    </location>
</feature>
<feature type="topological domain" description="Cytoplasmic" evidence="6">
    <location>
        <begin position="134"/>
        <end position="152"/>
    </location>
</feature>
<feature type="transmembrane region" description="Helical; Name=4" evidence="1">
    <location>
        <begin position="153"/>
        <end position="173"/>
    </location>
</feature>
<feature type="topological domain" description="Extracellular" evidence="6">
    <location>
        <begin position="174"/>
        <end position="202"/>
    </location>
</feature>
<feature type="transmembrane region" description="Helical; Name=5" evidence="1">
    <location>
        <begin position="203"/>
        <end position="224"/>
    </location>
</feature>
<feature type="topological domain" description="Cytoplasmic" evidence="6">
    <location>
        <begin position="225"/>
        <end position="252"/>
    </location>
</feature>
<feature type="transmembrane region" description="Helical; Name=6" evidence="1">
    <location>
        <begin position="253"/>
        <end position="274"/>
    </location>
</feature>
<feature type="topological domain" description="Extracellular" evidence="6">
    <location>
        <begin position="275"/>
        <end position="286"/>
    </location>
</feature>
<feature type="transmembrane region" description="Helical; Name=7" evidence="1">
    <location>
        <begin position="287"/>
        <end position="308"/>
    </location>
</feature>
<feature type="topological domain" description="Cytoplasmic" evidence="6">
    <location>
        <begin position="309"/>
        <end position="354"/>
    </location>
</feature>
<feature type="region of interest" description="Disordered" evidence="5">
    <location>
        <begin position="331"/>
        <end position="354"/>
    </location>
</feature>
<feature type="short sequence motif" description="'Ionic lock' involved in activated form stabilization" evidence="1">
    <location>
        <begin position="134"/>
        <end position="136"/>
    </location>
</feature>
<feature type="compositionally biased region" description="Low complexity" evidence="5">
    <location>
        <begin position="334"/>
        <end position="354"/>
    </location>
</feature>
<feature type="site" description="Plays an important role in the conformation switch to the active conformation" evidence="1">
    <location>
        <position position="113"/>
    </location>
</feature>
<feature type="modified residue" description="N6-(retinylidene)lysine" evidence="1">
    <location>
        <position position="296"/>
    </location>
</feature>
<feature type="lipid moiety-binding region" description="S-palmitoyl cysteine" evidence="1">
    <location>
        <position position="322"/>
    </location>
</feature>
<feature type="lipid moiety-binding region" description="S-palmitoyl cysteine" evidence="1">
    <location>
        <position position="323"/>
    </location>
</feature>
<feature type="glycosylation site" description="N-linked (GlcNAc...) asparagine" evidence="3">
    <location>
        <position position="2"/>
    </location>
</feature>
<feature type="glycosylation site" description="N-linked (GlcNAc...) asparagine" evidence="3">
    <location>
        <position position="15"/>
    </location>
</feature>
<feature type="disulfide bond" evidence="4">
    <location>
        <begin position="110"/>
        <end position="187"/>
    </location>
</feature>
<name>OPSD_BUFBU</name>
<proteinExistence type="evidence at transcript level"/>
<protein>
    <recommendedName>
        <fullName>Rhodopsin</fullName>
    </recommendedName>
</protein>
<dbReference type="EMBL" id="U59921">
    <property type="protein sequence ID" value="AAB93704.1"/>
    <property type="molecule type" value="mRNA"/>
</dbReference>
<dbReference type="RefSeq" id="XP_040264312.1">
    <property type="nucleotide sequence ID" value="XM_040408378.1"/>
</dbReference>
<dbReference type="SMR" id="P56514"/>
<dbReference type="GlyCosmos" id="P56514">
    <property type="glycosylation" value="2 sites, No reported glycans"/>
</dbReference>
<dbReference type="GeneID" id="120979563"/>
<dbReference type="OMA" id="VICGFTT"/>
<dbReference type="GO" id="GO:0016020">
    <property type="term" value="C:membrane"/>
    <property type="evidence" value="ECO:0000250"/>
    <property type="project" value="UniProtKB"/>
</dbReference>
<dbReference type="GO" id="GO:0097381">
    <property type="term" value="C:photoreceptor disc membrane"/>
    <property type="evidence" value="ECO:0000250"/>
    <property type="project" value="UniProtKB"/>
</dbReference>
<dbReference type="GO" id="GO:0005886">
    <property type="term" value="C:plasma membrane"/>
    <property type="evidence" value="ECO:0000250"/>
    <property type="project" value="UniProtKB"/>
</dbReference>
<dbReference type="GO" id="GO:0005502">
    <property type="term" value="F:11-cis retinal binding"/>
    <property type="evidence" value="ECO:0000250"/>
    <property type="project" value="UniProtKB"/>
</dbReference>
<dbReference type="GO" id="GO:0008020">
    <property type="term" value="F:G protein-coupled photoreceptor activity"/>
    <property type="evidence" value="ECO:0000250"/>
    <property type="project" value="UniProtKB"/>
</dbReference>
<dbReference type="GO" id="GO:0016038">
    <property type="term" value="P:absorption of visible light"/>
    <property type="evidence" value="ECO:0000250"/>
    <property type="project" value="UniProtKB"/>
</dbReference>
<dbReference type="GO" id="GO:0016056">
    <property type="term" value="P:G protein-coupled opsin signaling pathway"/>
    <property type="evidence" value="ECO:0000250"/>
    <property type="project" value="UniProtKB"/>
</dbReference>
<dbReference type="GO" id="GO:0007601">
    <property type="term" value="P:visual perception"/>
    <property type="evidence" value="ECO:0007669"/>
    <property type="project" value="UniProtKB-KW"/>
</dbReference>
<dbReference type="CDD" id="cd15080">
    <property type="entry name" value="7tmA_MWS_opsin"/>
    <property type="match status" value="1"/>
</dbReference>
<dbReference type="FunFam" id="1.20.1070.10:FF:000018">
    <property type="entry name" value="Rhodopsin"/>
    <property type="match status" value="1"/>
</dbReference>
<dbReference type="Gene3D" id="1.20.1070.10">
    <property type="entry name" value="Rhodopsin 7-helix transmembrane proteins"/>
    <property type="match status" value="1"/>
</dbReference>
<dbReference type="InterPro" id="IPR050125">
    <property type="entry name" value="GPCR_opsins"/>
</dbReference>
<dbReference type="InterPro" id="IPR000276">
    <property type="entry name" value="GPCR_Rhodpsn"/>
</dbReference>
<dbReference type="InterPro" id="IPR017452">
    <property type="entry name" value="GPCR_Rhodpsn_7TM"/>
</dbReference>
<dbReference type="InterPro" id="IPR001760">
    <property type="entry name" value="Opsin"/>
</dbReference>
<dbReference type="InterPro" id="IPR027430">
    <property type="entry name" value="Retinal_BS"/>
</dbReference>
<dbReference type="InterPro" id="IPR000732">
    <property type="entry name" value="Rhodopsin"/>
</dbReference>
<dbReference type="InterPro" id="IPR019477">
    <property type="entry name" value="Rhodopsin_N"/>
</dbReference>
<dbReference type="PANTHER" id="PTHR24240">
    <property type="entry name" value="OPSIN"/>
    <property type="match status" value="1"/>
</dbReference>
<dbReference type="Pfam" id="PF00001">
    <property type="entry name" value="7tm_1"/>
    <property type="match status" value="1"/>
</dbReference>
<dbReference type="Pfam" id="PF10413">
    <property type="entry name" value="Rhodopsin_N"/>
    <property type="match status" value="1"/>
</dbReference>
<dbReference type="PRINTS" id="PR00237">
    <property type="entry name" value="GPCRRHODOPSN"/>
</dbReference>
<dbReference type="PRINTS" id="PR00238">
    <property type="entry name" value="OPSIN"/>
</dbReference>
<dbReference type="PRINTS" id="PR00579">
    <property type="entry name" value="RHODOPSIN"/>
</dbReference>
<dbReference type="SUPFAM" id="SSF81321">
    <property type="entry name" value="Family A G protein-coupled receptor-like"/>
    <property type="match status" value="1"/>
</dbReference>
<dbReference type="PROSITE" id="PS00237">
    <property type="entry name" value="G_PROTEIN_RECEP_F1_1"/>
    <property type="match status" value="1"/>
</dbReference>
<dbReference type="PROSITE" id="PS50262">
    <property type="entry name" value="G_PROTEIN_RECEP_F1_2"/>
    <property type="match status" value="1"/>
</dbReference>
<dbReference type="PROSITE" id="PS00238">
    <property type="entry name" value="OPSIN"/>
    <property type="match status" value="1"/>
</dbReference>
<keyword id="KW-0966">Cell projection</keyword>
<keyword id="KW-0157">Chromophore</keyword>
<keyword id="KW-1015">Disulfide bond</keyword>
<keyword id="KW-0297">G-protein coupled receptor</keyword>
<keyword id="KW-0325">Glycoprotein</keyword>
<keyword id="KW-0449">Lipoprotein</keyword>
<keyword id="KW-0472">Membrane</keyword>
<keyword id="KW-0564">Palmitate</keyword>
<keyword id="KW-0597">Phosphoprotein</keyword>
<keyword id="KW-0600">Photoreceptor protein</keyword>
<keyword id="KW-0675">Receptor</keyword>
<keyword id="KW-0681">Retinal protein</keyword>
<keyword id="KW-0716">Sensory transduction</keyword>
<keyword id="KW-0807">Transducer</keyword>
<keyword id="KW-0812">Transmembrane</keyword>
<keyword id="KW-1133">Transmembrane helix</keyword>
<keyword id="KW-0844">Vision</keyword>
<evidence type="ECO:0000250" key="1">
    <source>
        <dbReference type="UniProtKB" id="P02699"/>
    </source>
</evidence>
<evidence type="ECO:0000250" key="2">
    <source>
        <dbReference type="UniProtKB" id="P08100"/>
    </source>
</evidence>
<evidence type="ECO:0000255" key="3"/>
<evidence type="ECO:0000255" key="4">
    <source>
        <dbReference type="PROSITE-ProRule" id="PRU00521"/>
    </source>
</evidence>
<evidence type="ECO:0000256" key="5">
    <source>
        <dbReference type="SAM" id="MobiDB-lite"/>
    </source>
</evidence>
<evidence type="ECO:0000305" key="6"/>
<comment type="function">
    <text evidence="1 2">Photoreceptor required for image-forming vision at low light intensity. Required for photoreceptor cell viability after birth (By similarity). Light-induced isomerization of 11-cis to all-trans retinal triggers a conformational change that activates signaling via G-proteins. Subsequent receptor phosphorylation mediates displacement of the bound G-protein alpha subunit by arrestin and terminates signaling (By similarity).</text>
</comment>
<comment type="subcellular location">
    <subcellularLocation>
        <location evidence="2">Membrane</location>
        <topology evidence="2">Multi-pass membrane protein</topology>
    </subcellularLocation>
    <subcellularLocation>
        <location evidence="2">Cell projection</location>
        <location evidence="2">Cilium</location>
        <location evidence="2">Photoreceptor outer segment</location>
    </subcellularLocation>
    <text evidence="2">Synthesized in the inner segment (IS) of rod photoreceptor cells before vectorial transport to disk membranes in the rod outer segment (OS) photosensory cilia.</text>
</comment>
<comment type="PTM">
    <text evidence="1">Contains one covalently linked retinal chromophore. Upon light absorption, the covalently bound 11-cis-retinal is converted to all-trans-retinal. After hydrolysis of the Schiff base and release of the covalently bound all-trans-retinal, active rhodopsin is regenerated by binding of a fresh molecule of 11-cis-retinal.</text>
</comment>
<comment type="similarity">
    <text evidence="4">Belongs to the G-protein coupled receptor 1 family. Opsin subfamily.</text>
</comment>
<reference key="1">
    <citation type="journal article" date="1998" name="Exp. Eye Res.">
        <title>Rhodopsins from three frog and toad species: sequences and functional comparisons.</title>
        <authorList>
            <person name="Fyhrquist N."/>
            <person name="Donner K."/>
            <person name="Hargrave P.A."/>
            <person name="McDowell J.H."/>
            <person name="Popp M.P."/>
            <person name="Smith W.C."/>
        </authorList>
    </citation>
    <scope>NUCLEOTIDE SEQUENCE [MRNA]</scope>
</reference>
<accession>P56514</accession>
<organism>
    <name type="scientific">Bufo bufo</name>
    <name type="common">European toad</name>
    <name type="synonym">Rana bufo</name>
    <dbReference type="NCBI Taxonomy" id="8384"/>
    <lineage>
        <taxon>Eukaryota</taxon>
        <taxon>Metazoa</taxon>
        <taxon>Chordata</taxon>
        <taxon>Craniata</taxon>
        <taxon>Vertebrata</taxon>
        <taxon>Euteleostomi</taxon>
        <taxon>Amphibia</taxon>
        <taxon>Batrachia</taxon>
        <taxon>Anura</taxon>
        <taxon>Neobatrachia</taxon>
        <taxon>Hyloidea</taxon>
        <taxon>Bufonidae</taxon>
        <taxon>Bufo</taxon>
    </lineage>
</organism>
<gene>
    <name type="primary">RHO</name>
</gene>